<keyword id="KW-0056">Arginine metabolism</keyword>
<keyword id="KW-0963">Cytoplasm</keyword>
<keyword id="KW-0378">Hydrolase</keyword>
<feature type="chain" id="PRO_1000100750" description="Arginine deiminase">
    <location>
        <begin position="1"/>
        <end position="407"/>
    </location>
</feature>
<feature type="active site" description="Amidino-cysteine intermediate" evidence="1">
    <location>
        <position position="397"/>
    </location>
</feature>
<gene>
    <name evidence="1" type="primary">arcA</name>
    <name type="ordered locus">VC0395_A2842</name>
    <name type="ordered locus">VC395_0467</name>
</gene>
<sequence>MNRLYVGSEVGQLRRVLLNRPERALTHLTPSNCHELLFDDVLAVEAAGVEHDAFANTLRTQDVEVLLLHDLLEETLAIPEARQWLLNTQISDFRFGPTFARELRHALNHLDDHHLTTLLLGGLAFSELHLESDSMLPKMRQPLDFVIEPLPNHLFTRDTSCWVYGGVSLNPMMKPARQRETNHLRAIYRWHPIFAQHPFIHYFGIDDLHYDNANIEGGDVLVIGKGAVLIGMSERTSPQGVENLAAALFKHGQASKVIAINLPKHRSCMHLDTVMTHMDVDTFSVYPEVMRKDLPTWRLTPKGNNGDMRVEQVPSYLHAIEQALGVDYLKIITTGGNSYEAEREQWNDANNVLTVKPGVVIGYERNVYTNEKYDKAGIKVLTIPGNELGRGRGGARCMSCPIERDGI</sequence>
<name>ARCA_VIBC3</name>
<evidence type="ECO:0000255" key="1">
    <source>
        <dbReference type="HAMAP-Rule" id="MF_00242"/>
    </source>
</evidence>
<comment type="catalytic activity">
    <reaction evidence="1">
        <text>L-arginine + H2O = L-citrulline + NH4(+)</text>
        <dbReference type="Rhea" id="RHEA:19597"/>
        <dbReference type="ChEBI" id="CHEBI:15377"/>
        <dbReference type="ChEBI" id="CHEBI:28938"/>
        <dbReference type="ChEBI" id="CHEBI:32682"/>
        <dbReference type="ChEBI" id="CHEBI:57743"/>
        <dbReference type="EC" id="3.5.3.6"/>
    </reaction>
</comment>
<comment type="pathway">
    <text evidence="1">Amino-acid degradation; L-arginine degradation via ADI pathway; carbamoyl phosphate from L-arginine: step 1/2.</text>
</comment>
<comment type="subcellular location">
    <subcellularLocation>
        <location evidence="1">Cytoplasm</location>
    </subcellularLocation>
</comment>
<comment type="similarity">
    <text evidence="1">Belongs to the arginine deiminase family.</text>
</comment>
<dbReference type="EC" id="3.5.3.6" evidence="1"/>
<dbReference type="EMBL" id="CP000627">
    <property type="protein sequence ID" value="ABQ21855.1"/>
    <property type="molecule type" value="Genomic_DNA"/>
</dbReference>
<dbReference type="EMBL" id="CP001235">
    <property type="protein sequence ID" value="ACP08487.1"/>
    <property type="molecule type" value="Genomic_DNA"/>
</dbReference>
<dbReference type="RefSeq" id="WP_001081182.1">
    <property type="nucleotide sequence ID" value="NZ_JAACZH010000015.1"/>
</dbReference>
<dbReference type="SMR" id="A5F8P7"/>
<dbReference type="KEGG" id="vco:VC0395_A2842"/>
<dbReference type="KEGG" id="vcr:VC395_0467"/>
<dbReference type="PATRIC" id="fig|345073.21.peg.455"/>
<dbReference type="eggNOG" id="COG2235">
    <property type="taxonomic scope" value="Bacteria"/>
</dbReference>
<dbReference type="HOGENOM" id="CLU_052662_0_0_6"/>
<dbReference type="OrthoDB" id="9807502at2"/>
<dbReference type="UniPathway" id="UPA00254">
    <property type="reaction ID" value="UER00364"/>
</dbReference>
<dbReference type="Proteomes" id="UP000000249">
    <property type="component" value="Chromosome 2"/>
</dbReference>
<dbReference type="GO" id="GO:0005737">
    <property type="term" value="C:cytoplasm"/>
    <property type="evidence" value="ECO:0007669"/>
    <property type="project" value="UniProtKB-SubCell"/>
</dbReference>
<dbReference type="GO" id="GO:0016990">
    <property type="term" value="F:arginine deiminase activity"/>
    <property type="evidence" value="ECO:0007669"/>
    <property type="project" value="UniProtKB-UniRule"/>
</dbReference>
<dbReference type="GO" id="GO:0019547">
    <property type="term" value="P:arginine catabolic process to ornithine"/>
    <property type="evidence" value="ECO:0007669"/>
    <property type="project" value="UniProtKB-UniRule"/>
</dbReference>
<dbReference type="GO" id="GO:0019546">
    <property type="term" value="P:arginine deiminase pathway"/>
    <property type="evidence" value="ECO:0007669"/>
    <property type="project" value="TreeGrafter"/>
</dbReference>
<dbReference type="FunFam" id="1.10.3930.10:FF:000002">
    <property type="entry name" value="Arginine deiminase"/>
    <property type="match status" value="1"/>
</dbReference>
<dbReference type="Gene3D" id="1.10.3930.10">
    <property type="entry name" value="Arginine deiminase"/>
    <property type="match status" value="1"/>
</dbReference>
<dbReference type="Gene3D" id="3.75.10.10">
    <property type="entry name" value="L-arginine/glycine Amidinotransferase, Chain A"/>
    <property type="match status" value="1"/>
</dbReference>
<dbReference type="HAMAP" id="MF_00242">
    <property type="entry name" value="Arg_deiminase"/>
    <property type="match status" value="1"/>
</dbReference>
<dbReference type="InterPro" id="IPR003876">
    <property type="entry name" value="Arg_deiminase"/>
</dbReference>
<dbReference type="NCBIfam" id="TIGR01078">
    <property type="entry name" value="arcA"/>
    <property type="match status" value="1"/>
</dbReference>
<dbReference type="NCBIfam" id="NF002381">
    <property type="entry name" value="PRK01388.1"/>
    <property type="match status" value="1"/>
</dbReference>
<dbReference type="PANTHER" id="PTHR47271">
    <property type="entry name" value="ARGININE DEIMINASE"/>
    <property type="match status" value="1"/>
</dbReference>
<dbReference type="PANTHER" id="PTHR47271:SF2">
    <property type="entry name" value="ARGININE DEIMINASE"/>
    <property type="match status" value="1"/>
</dbReference>
<dbReference type="Pfam" id="PF02274">
    <property type="entry name" value="ADI"/>
    <property type="match status" value="1"/>
</dbReference>
<dbReference type="PIRSF" id="PIRSF006356">
    <property type="entry name" value="Arg_deiminase"/>
    <property type="match status" value="1"/>
</dbReference>
<dbReference type="PRINTS" id="PR01466">
    <property type="entry name" value="ARGDEIMINASE"/>
</dbReference>
<dbReference type="SUPFAM" id="SSF55909">
    <property type="entry name" value="Pentein"/>
    <property type="match status" value="1"/>
</dbReference>
<organism>
    <name type="scientific">Vibrio cholerae serotype O1 (strain ATCC 39541 / Classical Ogawa 395 / O395)</name>
    <dbReference type="NCBI Taxonomy" id="345073"/>
    <lineage>
        <taxon>Bacteria</taxon>
        <taxon>Pseudomonadati</taxon>
        <taxon>Pseudomonadota</taxon>
        <taxon>Gammaproteobacteria</taxon>
        <taxon>Vibrionales</taxon>
        <taxon>Vibrionaceae</taxon>
        <taxon>Vibrio</taxon>
    </lineage>
</organism>
<proteinExistence type="inferred from homology"/>
<protein>
    <recommendedName>
        <fullName evidence="1">Arginine deiminase</fullName>
        <shortName evidence="1">ADI</shortName>
        <ecNumber evidence="1">3.5.3.6</ecNumber>
    </recommendedName>
    <alternativeName>
        <fullName evidence="1">Arginine dihydrolase</fullName>
        <shortName evidence="1">AD</shortName>
    </alternativeName>
</protein>
<reference key="1">
    <citation type="submission" date="2007-03" db="EMBL/GenBank/DDBJ databases">
        <authorList>
            <person name="Heidelberg J."/>
        </authorList>
    </citation>
    <scope>NUCLEOTIDE SEQUENCE [LARGE SCALE GENOMIC DNA]</scope>
    <source>
        <strain>ATCC 39541 / Classical Ogawa 395 / O395</strain>
    </source>
</reference>
<reference key="2">
    <citation type="journal article" date="2008" name="PLoS ONE">
        <title>A recalibrated molecular clock and independent origins for the cholera pandemic clones.</title>
        <authorList>
            <person name="Feng L."/>
            <person name="Reeves P.R."/>
            <person name="Lan R."/>
            <person name="Ren Y."/>
            <person name="Gao C."/>
            <person name="Zhou Z."/>
            <person name="Ren Y."/>
            <person name="Cheng J."/>
            <person name="Wang W."/>
            <person name="Wang J."/>
            <person name="Qian W."/>
            <person name="Li D."/>
            <person name="Wang L."/>
        </authorList>
    </citation>
    <scope>NUCLEOTIDE SEQUENCE [LARGE SCALE GENOMIC DNA]</scope>
    <source>
        <strain>ATCC 39541 / Classical Ogawa 395 / O395</strain>
    </source>
</reference>
<accession>A5F8P7</accession>
<accession>C3M4L5</accession>